<dbReference type="EC" id="4.1.2.40" evidence="1"/>
<dbReference type="EMBL" id="CP000730">
    <property type="protein sequence ID" value="ABX30179.1"/>
    <property type="molecule type" value="Genomic_DNA"/>
</dbReference>
<dbReference type="RefSeq" id="WP_000047009.1">
    <property type="nucleotide sequence ID" value="NC_010079.1"/>
</dbReference>
<dbReference type="SMR" id="A8YYF9"/>
<dbReference type="KEGG" id="sax:USA300HOU_2185"/>
<dbReference type="HOGENOM" id="CLU_058971_0_1_9"/>
<dbReference type="UniPathway" id="UPA00704">
    <property type="reaction ID" value="UER00716"/>
</dbReference>
<dbReference type="GO" id="GO:0061595">
    <property type="term" value="F:6-deoxy-6-sulfofructose-1-phosphate aldolase activity"/>
    <property type="evidence" value="ECO:0007669"/>
    <property type="project" value="TreeGrafter"/>
</dbReference>
<dbReference type="GO" id="GO:0009024">
    <property type="term" value="F:tagatose-6-phosphate kinase activity"/>
    <property type="evidence" value="ECO:0007669"/>
    <property type="project" value="InterPro"/>
</dbReference>
<dbReference type="GO" id="GO:0009025">
    <property type="term" value="F:tagatose-bisphosphate aldolase activity"/>
    <property type="evidence" value="ECO:0007669"/>
    <property type="project" value="UniProtKB-UniRule"/>
</dbReference>
<dbReference type="GO" id="GO:1902777">
    <property type="term" value="P:6-sulfoquinovose(1-) catabolic process"/>
    <property type="evidence" value="ECO:0007669"/>
    <property type="project" value="TreeGrafter"/>
</dbReference>
<dbReference type="GO" id="GO:2001059">
    <property type="term" value="P:D-tagatose 6-phosphate catabolic process"/>
    <property type="evidence" value="ECO:0007669"/>
    <property type="project" value="UniProtKB-UniRule"/>
</dbReference>
<dbReference type="GO" id="GO:0019512">
    <property type="term" value="P:lactose catabolic process via tagatose-6-phosphate"/>
    <property type="evidence" value="ECO:0007669"/>
    <property type="project" value="InterPro"/>
</dbReference>
<dbReference type="FunFam" id="3.20.20.70:FF:000137">
    <property type="entry name" value="Tagatose 1,6-diphosphate aldolase 2"/>
    <property type="match status" value="1"/>
</dbReference>
<dbReference type="Gene3D" id="3.20.20.70">
    <property type="entry name" value="Aldolase class I"/>
    <property type="match status" value="1"/>
</dbReference>
<dbReference type="HAMAP" id="MF_00734">
    <property type="entry name" value="LacD"/>
    <property type="match status" value="1"/>
</dbReference>
<dbReference type="InterPro" id="IPR013785">
    <property type="entry name" value="Aldolase_TIM"/>
</dbReference>
<dbReference type="InterPro" id="IPR002915">
    <property type="entry name" value="DeoC/FbaB/LacD_aldolase"/>
</dbReference>
<dbReference type="InterPro" id="IPR050552">
    <property type="entry name" value="LacD_aldolase"/>
</dbReference>
<dbReference type="InterPro" id="IPR005927">
    <property type="entry name" value="Tag_1.6-dipho_adolase"/>
</dbReference>
<dbReference type="NCBIfam" id="TIGR01232">
    <property type="entry name" value="lacD"/>
    <property type="match status" value="1"/>
</dbReference>
<dbReference type="NCBIfam" id="NF003180">
    <property type="entry name" value="PRK04161.1"/>
    <property type="match status" value="1"/>
</dbReference>
<dbReference type="NCBIfam" id="NF009065">
    <property type="entry name" value="PRK12399.1"/>
    <property type="match status" value="1"/>
</dbReference>
<dbReference type="NCBIfam" id="NF009498">
    <property type="entry name" value="PRK12858.1"/>
    <property type="match status" value="1"/>
</dbReference>
<dbReference type="PANTHER" id="PTHR39340">
    <property type="entry name" value="SULFOFRUCTOSEPHOSPHATE ALDOLASE"/>
    <property type="match status" value="1"/>
</dbReference>
<dbReference type="PANTHER" id="PTHR39340:SF1">
    <property type="entry name" value="SULFOFRUCTOSEPHOSPHATE ALDOLASE"/>
    <property type="match status" value="1"/>
</dbReference>
<dbReference type="Pfam" id="PF01791">
    <property type="entry name" value="DeoC"/>
    <property type="match status" value="1"/>
</dbReference>
<dbReference type="SMART" id="SM01133">
    <property type="entry name" value="DeoC"/>
    <property type="match status" value="1"/>
</dbReference>
<dbReference type="SUPFAM" id="SSF51569">
    <property type="entry name" value="Aldolase"/>
    <property type="match status" value="1"/>
</dbReference>
<proteinExistence type="inferred from homology"/>
<name>LACD_STAAT</name>
<keyword id="KW-0423">Lactose metabolism</keyword>
<keyword id="KW-0456">Lyase</keyword>
<accession>A8YYF9</accession>
<evidence type="ECO:0000255" key="1">
    <source>
        <dbReference type="HAMAP-Rule" id="MF_00734"/>
    </source>
</evidence>
<reference key="1">
    <citation type="journal article" date="2007" name="BMC Microbiol.">
        <title>Subtle genetic changes enhance virulence of methicillin resistant and sensitive Staphylococcus aureus.</title>
        <authorList>
            <person name="Highlander S.K."/>
            <person name="Hulten K.G."/>
            <person name="Qin X."/>
            <person name="Jiang H."/>
            <person name="Yerrapragada S."/>
            <person name="Mason E.O. Jr."/>
            <person name="Shang Y."/>
            <person name="Williams T.M."/>
            <person name="Fortunov R.M."/>
            <person name="Liu Y."/>
            <person name="Igboeli O."/>
            <person name="Petrosino J."/>
            <person name="Tirumalai M."/>
            <person name="Uzman A."/>
            <person name="Fox G.E."/>
            <person name="Cardenas A.M."/>
            <person name="Muzny D.M."/>
            <person name="Hemphill L."/>
            <person name="Ding Y."/>
            <person name="Dugan S."/>
            <person name="Blyth P.R."/>
            <person name="Buhay C.J."/>
            <person name="Dinh H.H."/>
            <person name="Hawes A.C."/>
            <person name="Holder M."/>
            <person name="Kovar C.L."/>
            <person name="Lee S.L."/>
            <person name="Liu W."/>
            <person name="Nazareth L.V."/>
            <person name="Wang Q."/>
            <person name="Zhou J."/>
            <person name="Kaplan S.L."/>
            <person name="Weinstock G.M."/>
        </authorList>
    </citation>
    <scope>NUCLEOTIDE SEQUENCE [LARGE SCALE GENOMIC DNA]</scope>
    <source>
        <strain>USA300 / TCH1516</strain>
    </source>
</reference>
<protein>
    <recommendedName>
        <fullName evidence="1">Tagatose 1,6-diphosphate aldolase</fullName>
        <ecNumber evidence="1">4.1.2.40</ecNumber>
    </recommendedName>
    <alternativeName>
        <fullName evidence="1">D-tagatose-1,6-bisphosphate aldolase</fullName>
    </alternativeName>
    <alternativeName>
        <fullName evidence="1">Tagatose-bisphosphate aldolase</fullName>
    </alternativeName>
</protein>
<comment type="catalytic activity">
    <reaction evidence="1">
        <text>D-tagatofuranose 1,6-bisphosphate = D-glyceraldehyde 3-phosphate + dihydroxyacetone phosphate</text>
        <dbReference type="Rhea" id="RHEA:22948"/>
        <dbReference type="ChEBI" id="CHEBI:57642"/>
        <dbReference type="ChEBI" id="CHEBI:58694"/>
        <dbReference type="ChEBI" id="CHEBI:59776"/>
        <dbReference type="EC" id="4.1.2.40"/>
    </reaction>
</comment>
<comment type="pathway">
    <text evidence="1">Carbohydrate metabolism; D-tagatose 6-phosphate degradation; D-glyceraldehyde 3-phosphate and glycerone phosphate from D-tagatose 6-phosphate: step 2/2.</text>
</comment>
<comment type="similarity">
    <text evidence="1">Belongs to the aldolase LacD family.</text>
</comment>
<gene>
    <name evidence="1" type="primary">lacD</name>
    <name type="ordered locus">USA300HOU_2185</name>
</gene>
<sequence length="326" mass="36595">MSKSNQKIASIEQLSNNEGIISALAFDQRGALKRMMAKHQTEEPTVAQIEQLKVLVAEELTQYASSILLDPEYGLPASDARNKDCGLLLAYEKTGYDVNAKGRLPDCLVEWSAKRLKEQGANAVKFLLYYDVDDAEEINIQKKAYIERIGSECVAEDIPFFLEVLTYDDNIPDNGSVEFAKVKPRKVNEAMKLFSEPRFNVDVLKVEVPVNMKYVEGFAEGEVVYTKEEAAQHFKDQDAATHLPYIYLSAGVSAELFQETLKFAHEAGAKFNGVLCGRATWSGAVQVYIEQGEDAAREWLRTTGFKNIDDLNKVLKDTATSWKQRK</sequence>
<feature type="chain" id="PRO_1000083345" description="Tagatose 1,6-diphosphate aldolase">
    <location>
        <begin position="1"/>
        <end position="326"/>
    </location>
</feature>
<organism>
    <name type="scientific">Staphylococcus aureus (strain USA300 / TCH1516)</name>
    <dbReference type="NCBI Taxonomy" id="451516"/>
    <lineage>
        <taxon>Bacteria</taxon>
        <taxon>Bacillati</taxon>
        <taxon>Bacillota</taxon>
        <taxon>Bacilli</taxon>
        <taxon>Bacillales</taxon>
        <taxon>Staphylococcaceae</taxon>
        <taxon>Staphylococcus</taxon>
    </lineage>
</organism>